<dbReference type="EC" id="2.7.7.3" evidence="1"/>
<dbReference type="EMBL" id="CP000613">
    <property type="protein sequence ID" value="ACI98483.1"/>
    <property type="molecule type" value="Genomic_DNA"/>
</dbReference>
<dbReference type="RefSeq" id="WP_012566272.1">
    <property type="nucleotide sequence ID" value="NC_011420.2"/>
</dbReference>
<dbReference type="SMR" id="B6ISP7"/>
<dbReference type="STRING" id="414684.RC1_1060"/>
<dbReference type="KEGG" id="rce:RC1_1060"/>
<dbReference type="eggNOG" id="COG0669">
    <property type="taxonomic scope" value="Bacteria"/>
</dbReference>
<dbReference type="HOGENOM" id="CLU_100149_0_1_5"/>
<dbReference type="OrthoDB" id="9806661at2"/>
<dbReference type="UniPathway" id="UPA00241">
    <property type="reaction ID" value="UER00355"/>
</dbReference>
<dbReference type="Proteomes" id="UP000001591">
    <property type="component" value="Chromosome"/>
</dbReference>
<dbReference type="GO" id="GO:0005737">
    <property type="term" value="C:cytoplasm"/>
    <property type="evidence" value="ECO:0007669"/>
    <property type="project" value="UniProtKB-SubCell"/>
</dbReference>
<dbReference type="GO" id="GO:0005524">
    <property type="term" value="F:ATP binding"/>
    <property type="evidence" value="ECO:0007669"/>
    <property type="project" value="UniProtKB-KW"/>
</dbReference>
<dbReference type="GO" id="GO:0004595">
    <property type="term" value="F:pantetheine-phosphate adenylyltransferase activity"/>
    <property type="evidence" value="ECO:0007669"/>
    <property type="project" value="UniProtKB-UniRule"/>
</dbReference>
<dbReference type="GO" id="GO:0015937">
    <property type="term" value="P:coenzyme A biosynthetic process"/>
    <property type="evidence" value="ECO:0007669"/>
    <property type="project" value="UniProtKB-UniRule"/>
</dbReference>
<dbReference type="CDD" id="cd02163">
    <property type="entry name" value="PPAT"/>
    <property type="match status" value="1"/>
</dbReference>
<dbReference type="Gene3D" id="3.40.50.620">
    <property type="entry name" value="HUPs"/>
    <property type="match status" value="1"/>
</dbReference>
<dbReference type="HAMAP" id="MF_00151">
    <property type="entry name" value="PPAT_bact"/>
    <property type="match status" value="1"/>
</dbReference>
<dbReference type="InterPro" id="IPR004821">
    <property type="entry name" value="Cyt_trans-like"/>
</dbReference>
<dbReference type="InterPro" id="IPR001980">
    <property type="entry name" value="PPAT"/>
</dbReference>
<dbReference type="InterPro" id="IPR014729">
    <property type="entry name" value="Rossmann-like_a/b/a_fold"/>
</dbReference>
<dbReference type="NCBIfam" id="TIGR01510">
    <property type="entry name" value="coaD_prev_kdtB"/>
    <property type="match status" value="1"/>
</dbReference>
<dbReference type="NCBIfam" id="TIGR00125">
    <property type="entry name" value="cyt_tran_rel"/>
    <property type="match status" value="1"/>
</dbReference>
<dbReference type="PANTHER" id="PTHR21342">
    <property type="entry name" value="PHOSPHOPANTETHEINE ADENYLYLTRANSFERASE"/>
    <property type="match status" value="1"/>
</dbReference>
<dbReference type="PANTHER" id="PTHR21342:SF1">
    <property type="entry name" value="PHOSPHOPANTETHEINE ADENYLYLTRANSFERASE"/>
    <property type="match status" value="1"/>
</dbReference>
<dbReference type="Pfam" id="PF01467">
    <property type="entry name" value="CTP_transf_like"/>
    <property type="match status" value="1"/>
</dbReference>
<dbReference type="PRINTS" id="PR01020">
    <property type="entry name" value="LPSBIOSNTHSS"/>
</dbReference>
<dbReference type="SUPFAM" id="SSF52374">
    <property type="entry name" value="Nucleotidylyl transferase"/>
    <property type="match status" value="1"/>
</dbReference>
<sequence>MSVRKRIGVYPGTFDPITNGHFDIIQRATLVVDHLIVGVARNAGKGPLFSTDERVEMVRDELPHISTHGATVEVRAFDSLLMHFAVEMGAQVIIRGLRAVSDFEYEFQMAGMNHRLNPQVETLFLMASDRHQFISSRFVKEIGRLGGDIRPFVSPRVAKRLLSRFAQEMPLPADTTLPLQAAP</sequence>
<keyword id="KW-0067">ATP-binding</keyword>
<keyword id="KW-0173">Coenzyme A biosynthesis</keyword>
<keyword id="KW-0963">Cytoplasm</keyword>
<keyword id="KW-0460">Magnesium</keyword>
<keyword id="KW-0547">Nucleotide-binding</keyword>
<keyword id="KW-0548">Nucleotidyltransferase</keyword>
<keyword id="KW-1185">Reference proteome</keyword>
<keyword id="KW-0808">Transferase</keyword>
<feature type="chain" id="PRO_1000096830" description="Phosphopantetheine adenylyltransferase">
    <location>
        <begin position="1"/>
        <end position="183"/>
    </location>
</feature>
<feature type="binding site" evidence="1">
    <location>
        <begin position="13"/>
        <end position="14"/>
    </location>
    <ligand>
        <name>ATP</name>
        <dbReference type="ChEBI" id="CHEBI:30616"/>
    </ligand>
</feature>
<feature type="binding site" evidence="1">
    <location>
        <position position="13"/>
    </location>
    <ligand>
        <name>substrate</name>
    </ligand>
</feature>
<feature type="binding site" evidence="1">
    <location>
        <position position="21"/>
    </location>
    <ligand>
        <name>ATP</name>
        <dbReference type="ChEBI" id="CHEBI:30616"/>
    </ligand>
</feature>
<feature type="binding site" evidence="1">
    <location>
        <position position="45"/>
    </location>
    <ligand>
        <name>substrate</name>
    </ligand>
</feature>
<feature type="binding site" evidence="1">
    <location>
        <position position="81"/>
    </location>
    <ligand>
        <name>substrate</name>
    </ligand>
</feature>
<feature type="binding site" evidence="1">
    <location>
        <position position="95"/>
    </location>
    <ligand>
        <name>substrate</name>
    </ligand>
</feature>
<feature type="binding site" evidence="1">
    <location>
        <begin position="96"/>
        <end position="98"/>
    </location>
    <ligand>
        <name>ATP</name>
        <dbReference type="ChEBI" id="CHEBI:30616"/>
    </ligand>
</feature>
<feature type="binding site" evidence="1">
    <location>
        <position position="106"/>
    </location>
    <ligand>
        <name>ATP</name>
        <dbReference type="ChEBI" id="CHEBI:30616"/>
    </ligand>
</feature>
<feature type="binding site" evidence="1">
    <location>
        <begin position="131"/>
        <end position="137"/>
    </location>
    <ligand>
        <name>ATP</name>
        <dbReference type="ChEBI" id="CHEBI:30616"/>
    </ligand>
</feature>
<feature type="site" description="Transition state stabilizer" evidence="1">
    <location>
        <position position="21"/>
    </location>
</feature>
<accession>B6ISP7</accession>
<evidence type="ECO:0000255" key="1">
    <source>
        <dbReference type="HAMAP-Rule" id="MF_00151"/>
    </source>
</evidence>
<gene>
    <name evidence="1" type="primary">coaD</name>
    <name type="ordered locus">RC1_1060</name>
</gene>
<comment type="function">
    <text evidence="1">Reversibly transfers an adenylyl group from ATP to 4'-phosphopantetheine, yielding dephospho-CoA (dPCoA) and pyrophosphate.</text>
</comment>
<comment type="catalytic activity">
    <reaction evidence="1">
        <text>(R)-4'-phosphopantetheine + ATP + H(+) = 3'-dephospho-CoA + diphosphate</text>
        <dbReference type="Rhea" id="RHEA:19801"/>
        <dbReference type="ChEBI" id="CHEBI:15378"/>
        <dbReference type="ChEBI" id="CHEBI:30616"/>
        <dbReference type="ChEBI" id="CHEBI:33019"/>
        <dbReference type="ChEBI" id="CHEBI:57328"/>
        <dbReference type="ChEBI" id="CHEBI:61723"/>
        <dbReference type="EC" id="2.7.7.3"/>
    </reaction>
</comment>
<comment type="cofactor">
    <cofactor evidence="1">
        <name>Mg(2+)</name>
        <dbReference type="ChEBI" id="CHEBI:18420"/>
    </cofactor>
</comment>
<comment type="pathway">
    <text evidence="1">Cofactor biosynthesis; coenzyme A biosynthesis; CoA from (R)-pantothenate: step 4/5.</text>
</comment>
<comment type="subunit">
    <text evidence="1">Homohexamer.</text>
</comment>
<comment type="subcellular location">
    <subcellularLocation>
        <location evidence="1">Cytoplasm</location>
    </subcellularLocation>
</comment>
<comment type="similarity">
    <text evidence="1">Belongs to the bacterial CoaD family.</text>
</comment>
<protein>
    <recommendedName>
        <fullName evidence="1">Phosphopantetheine adenylyltransferase</fullName>
        <ecNumber evidence="1">2.7.7.3</ecNumber>
    </recommendedName>
    <alternativeName>
        <fullName evidence="1">Dephospho-CoA pyrophosphorylase</fullName>
    </alternativeName>
    <alternativeName>
        <fullName evidence="1">Pantetheine-phosphate adenylyltransferase</fullName>
        <shortName evidence="1">PPAT</shortName>
    </alternativeName>
</protein>
<organism>
    <name type="scientific">Rhodospirillum centenum (strain ATCC 51521 / SW)</name>
    <dbReference type="NCBI Taxonomy" id="414684"/>
    <lineage>
        <taxon>Bacteria</taxon>
        <taxon>Pseudomonadati</taxon>
        <taxon>Pseudomonadota</taxon>
        <taxon>Alphaproteobacteria</taxon>
        <taxon>Rhodospirillales</taxon>
        <taxon>Rhodospirillaceae</taxon>
        <taxon>Rhodospirillum</taxon>
    </lineage>
</organism>
<reference key="1">
    <citation type="submission" date="2007-03" db="EMBL/GenBank/DDBJ databases">
        <title>Genome sequence of Rhodospirillum centenum.</title>
        <authorList>
            <person name="Touchman J.W."/>
            <person name="Bauer C."/>
            <person name="Blankenship R.E."/>
        </authorList>
    </citation>
    <scope>NUCLEOTIDE SEQUENCE [LARGE SCALE GENOMIC DNA]</scope>
    <source>
        <strain>ATCC 51521 / SW</strain>
    </source>
</reference>
<proteinExistence type="inferred from homology"/>
<name>COAD_RHOCS</name>